<name>YGGU_ECO45</name>
<accession>B7MME1</accession>
<sequence length="96" mass="10429">MSAVTVNDDGLVLRLYIQPKASRDSIVGLHGDEVKVAITAPPVDGQANSHLVKFLGKQFRVAKSQVVIEKGELGRHKQIKIINPQQIPPEIAALIN</sequence>
<reference key="1">
    <citation type="journal article" date="2009" name="PLoS Genet.">
        <title>Organised genome dynamics in the Escherichia coli species results in highly diverse adaptive paths.</title>
        <authorList>
            <person name="Touchon M."/>
            <person name="Hoede C."/>
            <person name="Tenaillon O."/>
            <person name="Barbe V."/>
            <person name="Baeriswyl S."/>
            <person name="Bidet P."/>
            <person name="Bingen E."/>
            <person name="Bonacorsi S."/>
            <person name="Bouchier C."/>
            <person name="Bouvet O."/>
            <person name="Calteau A."/>
            <person name="Chiapello H."/>
            <person name="Clermont O."/>
            <person name="Cruveiller S."/>
            <person name="Danchin A."/>
            <person name="Diard M."/>
            <person name="Dossat C."/>
            <person name="Karoui M.E."/>
            <person name="Frapy E."/>
            <person name="Garry L."/>
            <person name="Ghigo J.M."/>
            <person name="Gilles A.M."/>
            <person name="Johnson J."/>
            <person name="Le Bouguenec C."/>
            <person name="Lescat M."/>
            <person name="Mangenot S."/>
            <person name="Martinez-Jehanne V."/>
            <person name="Matic I."/>
            <person name="Nassif X."/>
            <person name="Oztas S."/>
            <person name="Petit M.A."/>
            <person name="Pichon C."/>
            <person name="Rouy Z."/>
            <person name="Ruf C.S."/>
            <person name="Schneider D."/>
            <person name="Tourret J."/>
            <person name="Vacherie B."/>
            <person name="Vallenet D."/>
            <person name="Medigue C."/>
            <person name="Rocha E.P.C."/>
            <person name="Denamur E."/>
        </authorList>
    </citation>
    <scope>NUCLEOTIDE SEQUENCE [LARGE SCALE GENOMIC DNA]</scope>
    <source>
        <strain>S88 / ExPEC</strain>
    </source>
</reference>
<comment type="similarity">
    <text evidence="1">Belongs to the UPF0235 family.</text>
</comment>
<organism>
    <name type="scientific">Escherichia coli O45:K1 (strain S88 / ExPEC)</name>
    <dbReference type="NCBI Taxonomy" id="585035"/>
    <lineage>
        <taxon>Bacteria</taxon>
        <taxon>Pseudomonadati</taxon>
        <taxon>Pseudomonadota</taxon>
        <taxon>Gammaproteobacteria</taxon>
        <taxon>Enterobacterales</taxon>
        <taxon>Enterobacteriaceae</taxon>
        <taxon>Escherichia</taxon>
    </lineage>
</organism>
<keyword id="KW-1185">Reference proteome</keyword>
<proteinExistence type="inferred from homology"/>
<dbReference type="EMBL" id="CU928161">
    <property type="protein sequence ID" value="CAR04470.1"/>
    <property type="molecule type" value="Genomic_DNA"/>
</dbReference>
<dbReference type="RefSeq" id="WP_001277222.1">
    <property type="nucleotide sequence ID" value="NC_011742.1"/>
</dbReference>
<dbReference type="SMR" id="B7MME1"/>
<dbReference type="GeneID" id="86861043"/>
<dbReference type="KEGG" id="ecz:ECS88_3235"/>
<dbReference type="HOGENOM" id="CLU_130694_5_0_6"/>
<dbReference type="Proteomes" id="UP000000747">
    <property type="component" value="Chromosome"/>
</dbReference>
<dbReference type="GO" id="GO:0005737">
    <property type="term" value="C:cytoplasm"/>
    <property type="evidence" value="ECO:0007669"/>
    <property type="project" value="TreeGrafter"/>
</dbReference>
<dbReference type="Gene3D" id="3.30.1200.10">
    <property type="entry name" value="YggU-like"/>
    <property type="match status" value="1"/>
</dbReference>
<dbReference type="HAMAP" id="MF_00634">
    <property type="entry name" value="UPF0235"/>
    <property type="match status" value="1"/>
</dbReference>
<dbReference type="InterPro" id="IPR003746">
    <property type="entry name" value="DUF167"/>
</dbReference>
<dbReference type="InterPro" id="IPR036591">
    <property type="entry name" value="YggU-like_sf"/>
</dbReference>
<dbReference type="NCBIfam" id="TIGR00251">
    <property type="entry name" value="DUF167 family protein"/>
    <property type="match status" value="1"/>
</dbReference>
<dbReference type="NCBIfam" id="NF003466">
    <property type="entry name" value="PRK05090.1"/>
    <property type="match status" value="1"/>
</dbReference>
<dbReference type="PANTHER" id="PTHR13420">
    <property type="entry name" value="UPF0235 PROTEIN C15ORF40"/>
    <property type="match status" value="1"/>
</dbReference>
<dbReference type="PANTHER" id="PTHR13420:SF7">
    <property type="entry name" value="UPF0235 PROTEIN C15ORF40"/>
    <property type="match status" value="1"/>
</dbReference>
<dbReference type="Pfam" id="PF02594">
    <property type="entry name" value="DUF167"/>
    <property type="match status" value="1"/>
</dbReference>
<dbReference type="SMART" id="SM01152">
    <property type="entry name" value="DUF167"/>
    <property type="match status" value="1"/>
</dbReference>
<dbReference type="SUPFAM" id="SSF69786">
    <property type="entry name" value="YggU-like"/>
    <property type="match status" value="1"/>
</dbReference>
<gene>
    <name evidence="1" type="primary">yggU</name>
    <name type="ordered locus">ECS88_3235</name>
</gene>
<evidence type="ECO:0000255" key="1">
    <source>
        <dbReference type="HAMAP-Rule" id="MF_00634"/>
    </source>
</evidence>
<protein>
    <recommendedName>
        <fullName evidence="1">UPF0235 protein YggU</fullName>
    </recommendedName>
</protein>
<feature type="chain" id="PRO_1000130678" description="UPF0235 protein YggU">
    <location>
        <begin position="1"/>
        <end position="96"/>
    </location>
</feature>